<proteinExistence type="evidence at protein level"/>
<reference key="1">
    <citation type="journal article" date="1994" name="Biochim. Biophys. Acta">
        <title>Cloning and nucleotide sequence of the gene for NADH:FMN oxidoreductase from Vibrio harveyi.</title>
        <authorList>
            <person name="Izumoto Y."/>
            <person name="Mori T."/>
            <person name="Yamamoto T."/>
        </authorList>
    </citation>
    <scope>NUCLEOTIDE SEQUENCE [GENOMIC DNA]</scope>
    <scope>PROTEIN SEQUENCE OF 2-21; 163-178 AND 226-236</scope>
    <source>
        <strain>ATCC 14126 / NBRC 15634 / NCIMB 1280</strain>
    </source>
</reference>
<reference key="2">
    <citation type="journal article" date="1994" name="J. Bacteriol.">
        <title>Identification of the genes encoding NAD(P)H-flavin oxidoreductases that are similar in sequence to Escherichia coli Fre in four species of luminous bacteria: Photorhabdus luminescens, Vibrio fischeri, Vibrio harveyi, and Vibrio orientalis.</title>
        <authorList>
            <person name="Zenno S."/>
            <person name="Saigo K."/>
        </authorList>
    </citation>
    <scope>NUCLEOTIDE SEQUENCE [GENOMIC DNA] OF 41-204</scope>
    <source>
        <strain>ATCC 33843 / NCIMB 1871 / 392 / MAV</strain>
    </source>
</reference>
<reference key="3">
    <citation type="journal article" date="1982" name="Mol. Cell. Biochem.">
        <title>Specificities and properties of three reduced pyridine nucleotide-flavin mononucleotide reductases coupling to bacterial luciferase.</title>
        <authorList>
            <person name="Watanabe H."/>
            <person name="Hastings J.W."/>
        </authorList>
    </citation>
    <scope>PROTEIN SEQUENCE OF 2-21</scope>
</reference>
<gene>
    <name type="primary">fre</name>
</gene>
<organism>
    <name type="scientific">Vibrio harveyi</name>
    <name type="common">Beneckea harveyi</name>
    <dbReference type="NCBI Taxonomy" id="669"/>
    <lineage>
        <taxon>Bacteria</taxon>
        <taxon>Pseudomonadati</taxon>
        <taxon>Pseudomonadota</taxon>
        <taxon>Gammaproteobacteria</taxon>
        <taxon>Vibrionales</taxon>
        <taxon>Vibrionaceae</taxon>
        <taxon>Vibrio</taxon>
    </lineage>
</organism>
<feature type="initiator methionine" description="Removed" evidence="3 4">
    <location>
        <position position="1"/>
    </location>
</feature>
<feature type="chain" id="PRO_0000068150" description="NAD(P)H-flavin reductase">
    <location>
        <begin position="2"/>
        <end position="237"/>
    </location>
</feature>
<feature type="domain" description="FAD-binding FR-type" evidence="2">
    <location>
        <begin position="2"/>
        <end position="103"/>
    </location>
</feature>
<feature type="binding site" evidence="1">
    <location>
        <begin position="115"/>
        <end position="119"/>
    </location>
    <ligand>
        <name>pyridine</name>
        <dbReference type="ChEBI" id="CHEBI:16227"/>
    </ligand>
</feature>
<accession>P43127</accession>
<sequence>MTIQCKVKSIQPLACNTYQILLHPESPVPFKAGQYLMVVMGEKDKRPFSIASSPCRHEGELELHIGAAEHNAYALEVVEAMQAALETDGHIEIDAPHGDAWVQEESERPLLLIAGGTGFSYVRSILDHCVAQNKTNPIYLYWGARDNCQLYAKEELVEIADKFANVHFVPVVEEAPADWQGKVGNVLQAVSEDFESLENYDIYIAGRFEMAGAAREQFTQNKKAKSERMFADAYAFI</sequence>
<protein>
    <recommendedName>
        <fullName>NAD(P)H-flavin reductase</fullName>
        <ecNumber>1.5.1.-</ecNumber>
    </recommendedName>
    <alternativeName>
        <fullName>NAD(P)H:flavin oxidoreductase</fullName>
    </alternativeName>
</protein>
<dbReference type="EC" id="1.5.1.-"/>
<dbReference type="EMBL" id="D14674">
    <property type="protein sequence ID" value="BAA03505.1"/>
    <property type="molecule type" value="Genomic_DNA"/>
</dbReference>
<dbReference type="EMBL" id="D17746">
    <property type="protein sequence ID" value="BAA04598.1"/>
    <property type="molecule type" value="Genomic_DNA"/>
</dbReference>
<dbReference type="RefSeq" id="WP_009696790.1">
    <property type="nucleotide sequence ID" value="NZ_BBKY01000148.1"/>
</dbReference>
<dbReference type="SMR" id="P43127"/>
<dbReference type="STRING" id="669.AL538_09195"/>
<dbReference type="GeneID" id="83583448"/>
<dbReference type="OrthoDB" id="9806195at2"/>
<dbReference type="BioCyc" id="MetaCyc:MONOMER-16662"/>
<dbReference type="BRENDA" id="1.5.1.39">
    <property type="organism ID" value="6632"/>
</dbReference>
<dbReference type="BRENDA" id="1.5.1.42">
    <property type="organism ID" value="6632"/>
</dbReference>
<dbReference type="GO" id="GO:0016491">
    <property type="term" value="F:oxidoreductase activity"/>
    <property type="evidence" value="ECO:0007669"/>
    <property type="project" value="UniProtKB-KW"/>
</dbReference>
<dbReference type="GO" id="GO:0008218">
    <property type="term" value="P:bioluminescence"/>
    <property type="evidence" value="ECO:0007669"/>
    <property type="project" value="UniProtKB-KW"/>
</dbReference>
<dbReference type="CDD" id="cd06189">
    <property type="entry name" value="flavin_oxioreductase"/>
    <property type="match status" value="1"/>
</dbReference>
<dbReference type="Gene3D" id="3.40.50.80">
    <property type="entry name" value="Nucleotide-binding domain of ferredoxin-NADP reductase (FNR) module"/>
    <property type="match status" value="1"/>
</dbReference>
<dbReference type="Gene3D" id="2.40.30.10">
    <property type="entry name" value="Translation factors"/>
    <property type="match status" value="1"/>
</dbReference>
<dbReference type="InterPro" id="IPR017927">
    <property type="entry name" value="FAD-bd_FR_type"/>
</dbReference>
<dbReference type="InterPro" id="IPR039261">
    <property type="entry name" value="FNR_nucleotide-bd"/>
</dbReference>
<dbReference type="InterPro" id="IPR050415">
    <property type="entry name" value="MRET"/>
</dbReference>
<dbReference type="InterPro" id="IPR001433">
    <property type="entry name" value="OxRdtase_FAD/NAD-bd"/>
</dbReference>
<dbReference type="InterPro" id="IPR017938">
    <property type="entry name" value="Riboflavin_synthase-like_b-brl"/>
</dbReference>
<dbReference type="NCBIfam" id="NF005963">
    <property type="entry name" value="PRK08051.1"/>
    <property type="match status" value="1"/>
</dbReference>
<dbReference type="PANTHER" id="PTHR47354:SF7">
    <property type="entry name" value="NAD(P)H-FLAVIN REDUCTASE"/>
    <property type="match status" value="1"/>
</dbReference>
<dbReference type="PANTHER" id="PTHR47354">
    <property type="entry name" value="NADH OXIDOREDUCTASE HCR"/>
    <property type="match status" value="1"/>
</dbReference>
<dbReference type="Pfam" id="PF00175">
    <property type="entry name" value="NAD_binding_1"/>
    <property type="match status" value="1"/>
</dbReference>
<dbReference type="PRINTS" id="PR00410">
    <property type="entry name" value="PHEHYDRXLASE"/>
</dbReference>
<dbReference type="SUPFAM" id="SSF52343">
    <property type="entry name" value="Ferredoxin reductase-like, C-terminal NADP-linked domain"/>
    <property type="match status" value="1"/>
</dbReference>
<dbReference type="SUPFAM" id="SSF63380">
    <property type="entry name" value="Riboflavin synthase domain-like"/>
    <property type="match status" value="1"/>
</dbReference>
<dbReference type="PROSITE" id="PS51384">
    <property type="entry name" value="FAD_FR"/>
    <property type="match status" value="1"/>
</dbReference>
<name>FRE_VIBHA</name>
<comment type="function">
    <text>Involved in bioluminescence. It is a good supplier of reduced flavin mononucleotide (FMNH2) to the bioluminescence reaction. Preferably uses riboflavin as an electron acceptor when NADPH is used as an electron donor.</text>
</comment>
<comment type="similarity">
    <text evidence="5">Belongs to the Fre/LuxG FAD/NAD(P) flavoprotein oxidoreductase family.</text>
</comment>
<evidence type="ECO:0000250" key="1"/>
<evidence type="ECO:0000255" key="2">
    <source>
        <dbReference type="PROSITE-ProRule" id="PRU00716"/>
    </source>
</evidence>
<evidence type="ECO:0000269" key="3">
    <source>
    </source>
</evidence>
<evidence type="ECO:0000269" key="4">
    <source>
    </source>
</evidence>
<evidence type="ECO:0000305" key="5"/>
<keyword id="KW-0903">Direct protein sequencing</keyword>
<keyword id="KW-0274">FAD</keyword>
<keyword id="KW-0285">Flavoprotein</keyword>
<keyword id="KW-0455">Luminescence</keyword>
<keyword id="KW-0560">Oxidoreductase</keyword>